<evidence type="ECO:0000255" key="1">
    <source>
        <dbReference type="HAMAP-Rule" id="MF_00527"/>
    </source>
</evidence>
<reference key="1">
    <citation type="journal article" date="2006" name="Proc. Natl. Acad. Sci. U.S.A.">
        <title>Comparative genomics of the lactic acid bacteria.</title>
        <authorList>
            <person name="Makarova K.S."/>
            <person name="Slesarev A."/>
            <person name="Wolf Y.I."/>
            <person name="Sorokin A."/>
            <person name="Mirkin B."/>
            <person name="Koonin E.V."/>
            <person name="Pavlov A."/>
            <person name="Pavlova N."/>
            <person name="Karamychev V."/>
            <person name="Polouchine N."/>
            <person name="Shakhova V."/>
            <person name="Grigoriev I."/>
            <person name="Lou Y."/>
            <person name="Rohksar D."/>
            <person name="Lucas S."/>
            <person name="Huang K."/>
            <person name="Goodstein D.M."/>
            <person name="Hawkins T."/>
            <person name="Plengvidhya V."/>
            <person name="Welker D."/>
            <person name="Hughes J."/>
            <person name="Goh Y."/>
            <person name="Benson A."/>
            <person name="Baldwin K."/>
            <person name="Lee J.-H."/>
            <person name="Diaz-Muniz I."/>
            <person name="Dosti B."/>
            <person name="Smeianov V."/>
            <person name="Wechter W."/>
            <person name="Barabote R."/>
            <person name="Lorca G."/>
            <person name="Altermann E."/>
            <person name="Barrangou R."/>
            <person name="Ganesan B."/>
            <person name="Xie Y."/>
            <person name="Rawsthorne H."/>
            <person name="Tamir D."/>
            <person name="Parker C."/>
            <person name="Breidt F."/>
            <person name="Broadbent J.R."/>
            <person name="Hutkins R."/>
            <person name="O'Sullivan D."/>
            <person name="Steele J."/>
            <person name="Unlu G."/>
            <person name="Saier M.H. Jr."/>
            <person name="Klaenhammer T."/>
            <person name="Richardson P."/>
            <person name="Kozyavkin S."/>
            <person name="Weimer B.C."/>
            <person name="Mills D.A."/>
        </authorList>
    </citation>
    <scope>NUCLEOTIDE SEQUENCE [LARGE SCALE GENOMIC DNA]</scope>
    <source>
        <strain>ATCC BAA-365 / Lb-18</strain>
    </source>
</reference>
<organism>
    <name type="scientific">Lactobacillus delbrueckii subsp. bulgaricus (strain ATCC BAA-365 / Lb-18)</name>
    <dbReference type="NCBI Taxonomy" id="321956"/>
    <lineage>
        <taxon>Bacteria</taxon>
        <taxon>Bacillati</taxon>
        <taxon>Bacillota</taxon>
        <taxon>Bacilli</taxon>
        <taxon>Lactobacillales</taxon>
        <taxon>Lactobacillaceae</taxon>
        <taxon>Lactobacillus</taxon>
    </lineage>
</organism>
<name>3MGH_LACDB</name>
<proteinExistence type="inferred from homology"/>
<comment type="similarity">
    <text evidence="1">Belongs to the DNA glycosylase MPG family.</text>
</comment>
<sequence>MDYRNFFTGRPTSEICRDLIGRPFYYQAGGEKIGGYIVESEAYLGIYDRAAHSYGGRRSQANEGLWRAGGTIYIYSQRQYVFFDIACQEEGNPQGVLIRAIEPVWGLDQMLKNRGGKDGVLLTNGPAKLMQAMGIKSRNWDLAPLADSPFVIDLTEKKPAKEIVASPRIGIVQADPAWAQAPLRYYVAGNPYVSGMKKRDWADDHGWL</sequence>
<accession>Q04CJ7</accession>
<keyword id="KW-0227">DNA damage</keyword>
<keyword id="KW-0234">DNA repair</keyword>
<keyword id="KW-0378">Hydrolase</keyword>
<feature type="chain" id="PRO_1000050990" description="Putative 3-methyladenine DNA glycosylase">
    <location>
        <begin position="1"/>
        <end position="208"/>
    </location>
</feature>
<dbReference type="EC" id="3.2.2.-" evidence="1"/>
<dbReference type="EMBL" id="CP000412">
    <property type="protein sequence ID" value="ABJ57825.1"/>
    <property type="molecule type" value="Genomic_DNA"/>
</dbReference>
<dbReference type="RefSeq" id="WP_011677933.1">
    <property type="nucleotide sequence ID" value="NC_008529.1"/>
</dbReference>
<dbReference type="SMR" id="Q04CJ7"/>
<dbReference type="KEGG" id="lbu:LBUL_0146"/>
<dbReference type="HOGENOM" id="CLU_060471_2_0_9"/>
<dbReference type="BioCyc" id="LDEL321956:LBUL_RS00670-MONOMER"/>
<dbReference type="GO" id="GO:0003905">
    <property type="term" value="F:alkylbase DNA N-glycosylase activity"/>
    <property type="evidence" value="ECO:0007669"/>
    <property type="project" value="InterPro"/>
</dbReference>
<dbReference type="GO" id="GO:0003677">
    <property type="term" value="F:DNA binding"/>
    <property type="evidence" value="ECO:0007669"/>
    <property type="project" value="InterPro"/>
</dbReference>
<dbReference type="GO" id="GO:0006284">
    <property type="term" value="P:base-excision repair"/>
    <property type="evidence" value="ECO:0007669"/>
    <property type="project" value="InterPro"/>
</dbReference>
<dbReference type="CDD" id="cd00540">
    <property type="entry name" value="AAG"/>
    <property type="match status" value="1"/>
</dbReference>
<dbReference type="Gene3D" id="3.10.300.10">
    <property type="entry name" value="Methylpurine-DNA glycosylase (MPG)"/>
    <property type="match status" value="1"/>
</dbReference>
<dbReference type="HAMAP" id="MF_00527">
    <property type="entry name" value="3MGH"/>
    <property type="match status" value="1"/>
</dbReference>
<dbReference type="InterPro" id="IPR011034">
    <property type="entry name" value="Formyl_transferase-like_C_sf"/>
</dbReference>
<dbReference type="InterPro" id="IPR003180">
    <property type="entry name" value="MPG"/>
</dbReference>
<dbReference type="InterPro" id="IPR036995">
    <property type="entry name" value="MPG_sf"/>
</dbReference>
<dbReference type="NCBIfam" id="TIGR00567">
    <property type="entry name" value="3mg"/>
    <property type="match status" value="1"/>
</dbReference>
<dbReference type="PANTHER" id="PTHR10429">
    <property type="entry name" value="DNA-3-METHYLADENINE GLYCOSYLASE"/>
    <property type="match status" value="1"/>
</dbReference>
<dbReference type="PANTHER" id="PTHR10429:SF0">
    <property type="entry name" value="DNA-3-METHYLADENINE GLYCOSYLASE"/>
    <property type="match status" value="1"/>
</dbReference>
<dbReference type="Pfam" id="PF02245">
    <property type="entry name" value="Pur_DNA_glyco"/>
    <property type="match status" value="1"/>
</dbReference>
<dbReference type="SUPFAM" id="SSF50486">
    <property type="entry name" value="FMT C-terminal domain-like"/>
    <property type="match status" value="1"/>
</dbReference>
<gene>
    <name type="ordered locus">LBUL_0146</name>
</gene>
<protein>
    <recommendedName>
        <fullName evidence="1">Putative 3-methyladenine DNA glycosylase</fullName>
        <ecNumber evidence="1">3.2.2.-</ecNumber>
    </recommendedName>
</protein>